<sequence length="165" mass="17629">MALGLEDKKAIVAEVNEAAKGALSAVVADSRGVTVANMTGLRKAAREAGVYIRVVRNTLVKRAVAGTDFECLSDTFTGPTLIAFSTEHPGAAARLLKDFAKAQEKFEIKAAAFEGELIPAENIDRLAKLPTYEEALAQFMMTLKEASAGKFVRTLAALRDQKEAA</sequence>
<organism>
    <name type="scientific">Shewanella halifaxensis (strain HAW-EB4)</name>
    <dbReference type="NCBI Taxonomy" id="458817"/>
    <lineage>
        <taxon>Bacteria</taxon>
        <taxon>Pseudomonadati</taxon>
        <taxon>Pseudomonadota</taxon>
        <taxon>Gammaproteobacteria</taxon>
        <taxon>Alteromonadales</taxon>
        <taxon>Shewanellaceae</taxon>
        <taxon>Shewanella</taxon>
    </lineage>
</organism>
<keyword id="KW-0687">Ribonucleoprotein</keyword>
<keyword id="KW-0689">Ribosomal protein</keyword>
<keyword id="KW-0694">RNA-binding</keyword>
<keyword id="KW-0699">rRNA-binding</keyword>
<protein>
    <recommendedName>
        <fullName evidence="1">Large ribosomal subunit protein uL10</fullName>
    </recommendedName>
    <alternativeName>
        <fullName evidence="2">50S ribosomal protein L10</fullName>
    </alternativeName>
</protein>
<evidence type="ECO:0000255" key="1">
    <source>
        <dbReference type="HAMAP-Rule" id="MF_00362"/>
    </source>
</evidence>
<evidence type="ECO:0000305" key="2"/>
<gene>
    <name evidence="1" type="primary">rplJ</name>
    <name type="ordered locus">Shal_4143</name>
</gene>
<dbReference type="EMBL" id="CP000931">
    <property type="protein sequence ID" value="ABZ78683.1"/>
    <property type="molecule type" value="Genomic_DNA"/>
</dbReference>
<dbReference type="RefSeq" id="WP_012279188.1">
    <property type="nucleotide sequence ID" value="NC_010334.1"/>
</dbReference>
<dbReference type="STRING" id="458817.Shal_4143"/>
<dbReference type="KEGG" id="shl:Shal_4143"/>
<dbReference type="eggNOG" id="COG0244">
    <property type="taxonomic scope" value="Bacteria"/>
</dbReference>
<dbReference type="HOGENOM" id="CLU_092227_0_2_6"/>
<dbReference type="OrthoDB" id="9808307at2"/>
<dbReference type="Proteomes" id="UP000001317">
    <property type="component" value="Chromosome"/>
</dbReference>
<dbReference type="GO" id="GO:0015934">
    <property type="term" value="C:large ribosomal subunit"/>
    <property type="evidence" value="ECO:0007669"/>
    <property type="project" value="InterPro"/>
</dbReference>
<dbReference type="GO" id="GO:0070180">
    <property type="term" value="F:large ribosomal subunit rRNA binding"/>
    <property type="evidence" value="ECO:0007669"/>
    <property type="project" value="UniProtKB-UniRule"/>
</dbReference>
<dbReference type="GO" id="GO:0003735">
    <property type="term" value="F:structural constituent of ribosome"/>
    <property type="evidence" value="ECO:0007669"/>
    <property type="project" value="InterPro"/>
</dbReference>
<dbReference type="GO" id="GO:0006412">
    <property type="term" value="P:translation"/>
    <property type="evidence" value="ECO:0007669"/>
    <property type="project" value="UniProtKB-UniRule"/>
</dbReference>
<dbReference type="CDD" id="cd05797">
    <property type="entry name" value="Ribosomal_L10"/>
    <property type="match status" value="1"/>
</dbReference>
<dbReference type="FunFam" id="3.30.70.1730:FF:000001">
    <property type="entry name" value="50S ribosomal protein L10"/>
    <property type="match status" value="1"/>
</dbReference>
<dbReference type="Gene3D" id="3.30.70.1730">
    <property type="match status" value="1"/>
</dbReference>
<dbReference type="Gene3D" id="6.10.250.2350">
    <property type="match status" value="1"/>
</dbReference>
<dbReference type="HAMAP" id="MF_00362">
    <property type="entry name" value="Ribosomal_uL10"/>
    <property type="match status" value="1"/>
</dbReference>
<dbReference type="InterPro" id="IPR001790">
    <property type="entry name" value="Ribosomal_uL10"/>
</dbReference>
<dbReference type="InterPro" id="IPR043141">
    <property type="entry name" value="Ribosomal_uL10-like_sf"/>
</dbReference>
<dbReference type="InterPro" id="IPR022973">
    <property type="entry name" value="Ribosomal_uL10_bac"/>
</dbReference>
<dbReference type="InterPro" id="IPR047865">
    <property type="entry name" value="Ribosomal_uL10_bac_type"/>
</dbReference>
<dbReference type="InterPro" id="IPR002363">
    <property type="entry name" value="Ribosomal_uL10_CS_bac"/>
</dbReference>
<dbReference type="NCBIfam" id="NF000955">
    <property type="entry name" value="PRK00099.1-1"/>
    <property type="match status" value="1"/>
</dbReference>
<dbReference type="PANTHER" id="PTHR11560">
    <property type="entry name" value="39S RIBOSOMAL PROTEIN L10, MITOCHONDRIAL"/>
    <property type="match status" value="1"/>
</dbReference>
<dbReference type="Pfam" id="PF00466">
    <property type="entry name" value="Ribosomal_L10"/>
    <property type="match status" value="1"/>
</dbReference>
<dbReference type="SUPFAM" id="SSF160369">
    <property type="entry name" value="Ribosomal protein L10-like"/>
    <property type="match status" value="1"/>
</dbReference>
<dbReference type="PROSITE" id="PS01109">
    <property type="entry name" value="RIBOSOMAL_L10"/>
    <property type="match status" value="1"/>
</dbReference>
<reference key="1">
    <citation type="submission" date="2008-01" db="EMBL/GenBank/DDBJ databases">
        <title>Complete sequence of Shewanella halifaxensis HAW-EB4.</title>
        <authorList>
            <consortium name="US DOE Joint Genome Institute"/>
            <person name="Copeland A."/>
            <person name="Lucas S."/>
            <person name="Lapidus A."/>
            <person name="Glavina del Rio T."/>
            <person name="Dalin E."/>
            <person name="Tice H."/>
            <person name="Bruce D."/>
            <person name="Goodwin L."/>
            <person name="Pitluck S."/>
            <person name="Sims D."/>
            <person name="Brettin T."/>
            <person name="Detter J.C."/>
            <person name="Han C."/>
            <person name="Kuske C.R."/>
            <person name="Schmutz J."/>
            <person name="Larimer F."/>
            <person name="Land M."/>
            <person name="Hauser L."/>
            <person name="Kyrpides N."/>
            <person name="Kim E."/>
            <person name="Zhao J.-S."/>
            <person name="Richardson P."/>
        </authorList>
    </citation>
    <scope>NUCLEOTIDE SEQUENCE [LARGE SCALE GENOMIC DNA]</scope>
    <source>
        <strain>HAW-EB4</strain>
    </source>
</reference>
<feature type="chain" id="PRO_1000079561" description="Large ribosomal subunit protein uL10">
    <location>
        <begin position="1"/>
        <end position="165"/>
    </location>
</feature>
<name>RL10_SHEHH</name>
<comment type="function">
    <text evidence="1">Forms part of the ribosomal stalk, playing a central role in the interaction of the ribosome with GTP-bound translation factors.</text>
</comment>
<comment type="subunit">
    <text evidence="1">Part of the ribosomal stalk of the 50S ribosomal subunit. The N-terminus interacts with L11 and the large rRNA to form the base of the stalk. The C-terminus forms an elongated spine to which L12 dimers bind in a sequential fashion forming a multimeric L10(L12)X complex.</text>
</comment>
<comment type="similarity">
    <text evidence="1">Belongs to the universal ribosomal protein uL10 family.</text>
</comment>
<accession>B0TM21</accession>
<proteinExistence type="inferred from homology"/>